<comment type="similarity">
    <text evidence="1">Belongs to the herpesviridae BMRF2 family.</text>
</comment>
<reference key="1">
    <citation type="journal article" date="1992" name="J. Virol.">
        <title>Primary structure of the herpesvirus saimiri genome.</title>
        <authorList>
            <person name="Albrecht J.-C."/>
            <person name="Nicholas J."/>
            <person name="Biller D."/>
            <person name="Cameron K.R."/>
            <person name="Biesinger B."/>
            <person name="Newman C."/>
            <person name="Wittmann S."/>
            <person name="Craxton M.A."/>
            <person name="Coleman H."/>
            <person name="Fleckenstein B."/>
            <person name="Honess R.W."/>
        </authorList>
    </citation>
    <scope>NUCLEOTIDE SEQUENCE [LARGE SCALE GENOMIC DNA]</scope>
</reference>
<reference key="2">
    <citation type="journal article" date="1992" name="Virology">
        <title>Analysis of nucleotide sequence of the rightmost 43 kbp of herpesvirus saimiri (HVS) L-DNA: general conservation of genetic organization between HVS and Epstein-Barr virus.</title>
        <authorList>
            <person name="Nicholas J."/>
            <person name="Cameron K.R."/>
            <person name="Coleman H."/>
            <person name="Newman C."/>
            <person name="Honess R.W."/>
        </authorList>
    </citation>
    <scope>NUCLEOTIDE SEQUENCE [GENOMIC DNA]</scope>
</reference>
<proteinExistence type="inferred from homology"/>
<evidence type="ECO:0000305" key="1"/>
<sequence length="357" mass="40526">MIQEMWTQWVLNIRASCLGALAATPFIWCFIFKSLFTFSIFTSLQISIFYWAVLGAHVTILCYCYITFTKEWSYYIEALGIACLFLTMLTFFISHLMWAPLYTLPFVFVLNCICLSLWVPITYDIVYLCPFITYKYYELGFLNAMLLYYVMVANRMYLSVIFMCPFVLFLGMGVFALKNFHEHPVFENILITCKPIFTAKNKYKTKGTEVNMKLVVHNLGAVLFLLAVEFASVVSVVQRLDIFVGMQNYLFLLFVSMLCCCMFSLPSNAICVVLETFAVVIIIVIHVLIDKLPISIIGGLLVIVILLMCQAIGCQIEIIRTKLAGDVGGPKLCLFLCTVCNIVVSVALTCCNKSEQL</sequence>
<feature type="chain" id="PRO_0000116255" description="Gene 58 protein">
    <location>
        <begin position="1"/>
        <end position="357"/>
    </location>
</feature>
<keyword id="KW-1185">Reference proteome</keyword>
<gene>
    <name type="primary">58</name>
    <name type="synonym">EELF5</name>
</gene>
<name>VG58_SHV21</name>
<accession>Q01053</accession>
<dbReference type="EMBL" id="X64346">
    <property type="protein sequence ID" value="CAA45681.1"/>
    <property type="molecule type" value="Genomic_DNA"/>
</dbReference>
<dbReference type="EMBL" id="M86409">
    <property type="protein sequence ID" value="AAA46134.1"/>
    <property type="molecule type" value="Genomic_DNA"/>
</dbReference>
<dbReference type="RefSeq" id="NP_040260.1">
    <property type="nucleotide sequence ID" value="NC_001350.1"/>
</dbReference>
<dbReference type="KEGG" id="vg:1682474"/>
<dbReference type="Proteomes" id="UP000000587">
    <property type="component" value="Segment"/>
</dbReference>
<dbReference type="InterPro" id="IPR006727">
    <property type="entry name" value="Herpes_BMRF2"/>
</dbReference>
<dbReference type="Pfam" id="PF04633">
    <property type="entry name" value="Herpes_BMRF2"/>
    <property type="match status" value="1"/>
</dbReference>
<protein>
    <recommendedName>
        <fullName>Gene 58 protein</fullName>
    </recommendedName>
</protein>
<organismHost>
    <name type="scientific">Saimiri sciureus</name>
    <name type="common">Common squirrel monkey</name>
    <dbReference type="NCBI Taxonomy" id="9521"/>
</organismHost>
<organism>
    <name type="scientific">Saimiriine herpesvirus 2 (strain 11)</name>
    <name type="common">SaHV-2</name>
    <name type="synonym">Herpesvirus saimiri</name>
    <dbReference type="NCBI Taxonomy" id="10383"/>
    <lineage>
        <taxon>Viruses</taxon>
        <taxon>Duplodnaviria</taxon>
        <taxon>Heunggongvirae</taxon>
        <taxon>Peploviricota</taxon>
        <taxon>Herviviricetes</taxon>
        <taxon>Herpesvirales</taxon>
        <taxon>Orthoherpesviridae</taxon>
        <taxon>Gammaherpesvirinae</taxon>
        <taxon>Rhadinovirus</taxon>
        <taxon>Rhadinovirus saimiriinegamma2</taxon>
        <taxon>Saimiriine herpesvirus 2</taxon>
    </lineage>
</organism>